<organism>
    <name type="scientific">Mycoplasma pneumoniae (strain ATCC 29342 / M129 / Subtype 1)</name>
    <name type="common">Mycoplasmoides pneumoniae</name>
    <dbReference type="NCBI Taxonomy" id="272634"/>
    <lineage>
        <taxon>Bacteria</taxon>
        <taxon>Bacillati</taxon>
        <taxon>Mycoplasmatota</taxon>
        <taxon>Mycoplasmoidales</taxon>
        <taxon>Mycoplasmoidaceae</taxon>
        <taxon>Mycoplasmoides</taxon>
    </lineage>
</organism>
<proteinExistence type="inferred from homology"/>
<sequence length="1244" mass="139117">MKKFLRKPQFWLLTLGGFLSTSVILAACATPSNSALQTVFKARSSQFFNGEQGSLQSALTTALKNPVANKQFIAAPLLKALEAWYENNEDKKITQFLKDTKSNVDSQYTTAVDKVVSASRNKSLFVQQDLLDNAGGSEATWKAQKLLEQLISDFASRVFQKNYLNYKKDGQVSTGPFTYDELHKEESWKNFEFSAPRFSETNDDFFAKIQSQVFDQWVEYTDPTLISQVNYKYSAPSQGLGQIYNREKLKDKLTPSYAFPFFAEEKDIAPNQNVGNKRWKQLVKGEGAITDNNIGQSGTNSQKTGLLKYRNESNKGDFLDFPLNLSDTNETKQLVDASNIVDQLEAANLGAALNLKLQVFEQDNDELPQIKELKEDLNNTIVVDKSKDVEKASKTNALFYNDQEGKQQQSDSDPIAGALDDIFAQNTSEGTNLSKLAEQVKKAAATKMEAKTAVLRTNNSKGQQNNYVVLDAAIPTFNSTTSKSKNNSASNEVLVALKSGSINLRQVQQTDQNSYSPIKFRIVRNSTGVTVFGLDGGSYYLKQDSTNKKSVSKQSLTLLTKSSSGNSNKVLRDLDKQKQFLKFRAFQAKTNTFYSTNFAFSFPLNETLKSWFDKHRELILANALVNASLDQKDKASKALTEAFNPYKELIKEFAPVALATTMISFYFDQMKALNNKLLERARNLNQNVNQANPTPWLNGLSAKLPYVNTNGNYEKLNNYFTFLITKTLWPKVGQEETSISEESNKLKTKTADVDKIRDKILENIQTKVNDFVKNKLKPALAPRPAYSNVILLNVNNDKVLSSGANWSLASLLQSDKVNPLSFMLLKQAFDNNDLFKKAQKLFKDIQEKSSNNGGMQSSSTTNSDADALSKVIGNYYYTTWAKLTDKSIYGNPKDNKFDELFKLAFEASIDEKSFNVDYKAVIDHYRFIYTLQWLVDQKLKNFKSLLKTNLKFGEVAFIAYKNTETTNFSNPQGVFGSYFNYENSASEVKESTQTLDPNNFFYKTTTKPTVQAIQQVASLALVQKQQMQQNSTDHYGFTGLSTSTSSMFDASSRDAILQQITKTSLQQYGSKDQLKKIIQGTNNQLLLDRIAVQLSGLNPSTTNGGSGKTIATYFQVDAVGNPTLDFQAKRKLLLDLLDQYQNYFGNGAQKSQRDSTPSGTGNYLTYQNGSDKYTYTQFTYQDIDSLSLTTTSGTNNKIASDVVAALLLFQAADKGTQQLALSAINKPQLNIGDKRIESGLKLLK</sequence>
<comment type="subcellular location">
    <subcellularLocation>
        <location evidence="1">Cell membrane</location>
        <topology evidence="1">Lipid-anchor</topology>
    </subcellularLocation>
</comment>
<comment type="similarity">
    <text evidence="2">Belongs to the MG307/MG309/MG338 family.</text>
</comment>
<name>Y436_MYCPN</name>
<dbReference type="EMBL" id="U00089">
    <property type="protein sequence ID" value="AAB96053.1"/>
    <property type="molecule type" value="Genomic_DNA"/>
</dbReference>
<dbReference type="PIR" id="S73731">
    <property type="entry name" value="S73731"/>
</dbReference>
<dbReference type="RefSeq" id="NP_110124.1">
    <property type="nucleotide sequence ID" value="NC_000912.1"/>
</dbReference>
<dbReference type="RefSeq" id="WP_010874792.1">
    <property type="nucleotide sequence ID" value="NC_000912.1"/>
</dbReference>
<dbReference type="IntAct" id="P75342">
    <property type="interactions" value="1"/>
</dbReference>
<dbReference type="STRING" id="272634.MPN_436"/>
<dbReference type="EnsemblBacteria" id="AAB96053">
    <property type="protein sequence ID" value="AAB96053"/>
    <property type="gene ID" value="MPN_436"/>
</dbReference>
<dbReference type="KEGG" id="mpn:MPN_436"/>
<dbReference type="PATRIC" id="fig|272634.6.peg.471"/>
<dbReference type="HOGENOM" id="CLU_007912_0_0_14"/>
<dbReference type="OrthoDB" id="9956930at2"/>
<dbReference type="BioCyc" id="MPNE272634:G1GJ3-704-MONOMER"/>
<dbReference type="Proteomes" id="UP000000808">
    <property type="component" value="Chromosome"/>
</dbReference>
<dbReference type="GO" id="GO:0005886">
    <property type="term" value="C:plasma membrane"/>
    <property type="evidence" value="ECO:0007669"/>
    <property type="project" value="UniProtKB-SubCell"/>
</dbReference>
<dbReference type="InterPro" id="IPR022186">
    <property type="entry name" value="DUF3713"/>
</dbReference>
<dbReference type="Pfam" id="PF12506">
    <property type="entry name" value="DUF3713"/>
    <property type="match status" value="1"/>
</dbReference>
<dbReference type="PROSITE" id="PS51257">
    <property type="entry name" value="PROKAR_LIPOPROTEIN"/>
    <property type="match status" value="1"/>
</dbReference>
<keyword id="KW-1003">Cell membrane</keyword>
<keyword id="KW-0449">Lipoprotein</keyword>
<keyword id="KW-0472">Membrane</keyword>
<keyword id="KW-0564">Palmitate</keyword>
<keyword id="KW-1185">Reference proteome</keyword>
<keyword id="KW-0732">Signal</keyword>
<evidence type="ECO:0000255" key="1">
    <source>
        <dbReference type="PROSITE-ProRule" id="PRU00303"/>
    </source>
</evidence>
<evidence type="ECO:0000305" key="2"/>
<feature type="signal peptide" evidence="1">
    <location>
        <begin position="1"/>
        <end position="27"/>
    </location>
</feature>
<feature type="chain" id="PRO_0000014031" description="Uncharacterized lipoprotein MG307 homolog">
    <location>
        <begin position="28"/>
        <end position="1244"/>
    </location>
</feature>
<feature type="lipid moiety-binding region" description="N-palmitoyl cysteine" evidence="1">
    <location>
        <position position="28"/>
    </location>
</feature>
<feature type="lipid moiety-binding region" description="S-diacylglycerol cysteine" evidence="1">
    <location>
        <position position="28"/>
    </location>
</feature>
<reference key="1">
    <citation type="journal article" date="1996" name="Nucleic Acids Res.">
        <title>Complete sequence analysis of the genome of the bacterium Mycoplasma pneumoniae.</title>
        <authorList>
            <person name="Himmelreich R."/>
            <person name="Hilbert H."/>
            <person name="Plagens H."/>
            <person name="Pirkl E."/>
            <person name="Li B.-C."/>
            <person name="Herrmann R."/>
        </authorList>
    </citation>
    <scope>NUCLEOTIDE SEQUENCE [LARGE SCALE GENOMIC DNA]</scope>
    <source>
        <strain>ATCC 29342 / M129 / Subtype 1</strain>
    </source>
</reference>
<protein>
    <recommendedName>
        <fullName>Uncharacterized lipoprotein MG307 homolog</fullName>
    </recommendedName>
</protein>
<gene>
    <name type="ordered locus">MPN_436</name>
    <name type="ORF">A05_orf1244</name>
    <name type="ORF">MP405</name>
</gene>
<accession>P75342</accession>